<comment type="function">
    <text evidence="2 4">Probably responsible for the deacetylation of lysine residues on the N-terminal part of the core histones (H2A, H2B, H3 and H4) (By similarity). Histone deacetylation gives a tag for epigenetic repression and plays an important role in transcriptional regulation, cell cycle progression and developmental events (By similarity). Histone deacetylases act via the formation of large multiprotein complexes (By similarity). As a likely component of a histone deacetylase complex, together with saeg-1 and hda-2, functions downstream of the cAMP-dependent kinase egl-4 to regulate the expression of genes required for egg-laying and forgaging (PubMed:21573134).</text>
</comment>
<comment type="catalytic activity">
    <reaction>
        <text>N(6)-acetyl-L-lysyl-[histone] + H2O = L-lysyl-[histone] + acetate</text>
        <dbReference type="Rhea" id="RHEA:58196"/>
        <dbReference type="Rhea" id="RHEA-COMP:9845"/>
        <dbReference type="Rhea" id="RHEA-COMP:11338"/>
        <dbReference type="ChEBI" id="CHEBI:15377"/>
        <dbReference type="ChEBI" id="CHEBI:29969"/>
        <dbReference type="ChEBI" id="CHEBI:30089"/>
        <dbReference type="ChEBI" id="CHEBI:61930"/>
        <dbReference type="EC" id="3.5.1.98"/>
    </reaction>
</comment>
<comment type="subunit">
    <text evidence="4">May be a component of a histone deacetylase complex containing saeg-2, saeg-1 and hda-2.</text>
</comment>
<comment type="subcellular location">
    <subcellularLocation>
        <location evidence="1">Nucleus</location>
    </subcellularLocation>
</comment>
<comment type="similarity">
    <text evidence="5">Belongs to the histone deacetylase family. HD type 1 subfamily.</text>
</comment>
<name>HDA2_CAEEL</name>
<evidence type="ECO:0000250" key="1"/>
<evidence type="ECO:0000250" key="2">
    <source>
        <dbReference type="UniProtKB" id="Q92769"/>
    </source>
</evidence>
<evidence type="ECO:0000256" key="3">
    <source>
        <dbReference type="SAM" id="MobiDB-lite"/>
    </source>
</evidence>
<evidence type="ECO:0000269" key="4">
    <source>
    </source>
</evidence>
<evidence type="ECO:0000305" key="5"/>
<organism>
    <name type="scientific">Caenorhabditis elegans</name>
    <dbReference type="NCBI Taxonomy" id="6239"/>
    <lineage>
        <taxon>Eukaryota</taxon>
        <taxon>Metazoa</taxon>
        <taxon>Ecdysozoa</taxon>
        <taxon>Nematoda</taxon>
        <taxon>Chromadorea</taxon>
        <taxon>Rhabditida</taxon>
        <taxon>Rhabditina</taxon>
        <taxon>Rhabditomorpha</taxon>
        <taxon>Rhabditoidea</taxon>
        <taxon>Rhabditidae</taxon>
        <taxon>Peloderinae</taxon>
        <taxon>Caenorhabditis</taxon>
    </lineage>
</organism>
<sequence>MSSDKFKLDTLFDDNDEIIEPDGADVKKRNVAYYYHKDVGHFHYGQLHPMKPQRLVVCNDLVVSYEMPKYMTVVESPKLDAADISVFHTEDYVNFLQTVTPKLGLTMPDDVLRQFNIGEDCPIFAGLWDYCTLYAGGSVEGARRLNHKMNDIVINWPGGLHHAKKSEASGFCYVNDIVLGILELLKYHKRVLYIDIDIHHGDGVQEAFNNSDRVMTVSFHRFGQYFPGSGSIMDKGVGPGKYFAINVPLMAAIRDEPYLKLFESVISGVEENFNPEAIVLQCGSDSLCEDRLGQFALSFNAHARAVKYVKSLGKPLMVLGGGGYTLRNVARCWALETGVILGLRMDDEIPGTSLYSHYFTPRLLRPNLVPKMNDANSAAYLASIEKETLACLRMIRGAPSVQMQNIVGIRLDEIEQIEENERLQKSSKSSIEYEVGKVSEKMEEECFVEEDSKPPSFPPGQDPRRIGQYWGYDRSGLAPPRSHSDVIEEAKYEDRDRRKDLNIPGIP</sequence>
<proteinExistence type="evidence at protein level"/>
<feature type="chain" id="PRO_0000114720" description="Putative histone deacetylase 2">
    <location>
        <begin position="1"/>
        <end position="507"/>
    </location>
</feature>
<feature type="region of interest" description="Histone deacetylase">
    <location>
        <begin position="29"/>
        <end position="342"/>
    </location>
</feature>
<feature type="region of interest" description="Disordered" evidence="3">
    <location>
        <begin position="444"/>
        <end position="507"/>
    </location>
</feature>
<feature type="compositionally biased region" description="Basic and acidic residues" evidence="3">
    <location>
        <begin position="482"/>
        <end position="501"/>
    </location>
</feature>
<feature type="active site" evidence="1">
    <location>
        <position position="162"/>
    </location>
</feature>
<accession>Q09440</accession>
<protein>
    <recommendedName>
        <fullName>Putative histone deacetylase 2</fullName>
        <ecNumber>3.5.1.98</ecNumber>
    </recommendedName>
</protein>
<gene>
    <name type="primary">hda-2</name>
    <name type="ORF">C08B11.2</name>
</gene>
<dbReference type="EC" id="3.5.1.98"/>
<dbReference type="EMBL" id="Z46676">
    <property type="protein sequence ID" value="CAA86662.1"/>
    <property type="molecule type" value="Genomic_DNA"/>
</dbReference>
<dbReference type="PIR" id="T19067">
    <property type="entry name" value="T19067"/>
</dbReference>
<dbReference type="RefSeq" id="NP_495678.1">
    <property type="nucleotide sequence ID" value="NM_063277.9"/>
</dbReference>
<dbReference type="SMR" id="Q09440"/>
<dbReference type="BioGRID" id="39617">
    <property type="interactions" value="6"/>
</dbReference>
<dbReference type="FunCoup" id="Q09440">
    <property type="interactions" value="91"/>
</dbReference>
<dbReference type="IntAct" id="Q09440">
    <property type="interactions" value="1"/>
</dbReference>
<dbReference type="MINT" id="Q09440"/>
<dbReference type="STRING" id="6239.C08B11.2.1"/>
<dbReference type="PaxDb" id="6239-C08B11.2"/>
<dbReference type="PeptideAtlas" id="Q09440"/>
<dbReference type="EnsemblMetazoa" id="C08B11.2.1">
    <property type="protein sequence ID" value="C08B11.2.1"/>
    <property type="gene ID" value="WBGene00001835"/>
</dbReference>
<dbReference type="GeneID" id="174285"/>
<dbReference type="KEGG" id="cel:CELE_C08B11.2"/>
<dbReference type="UCSC" id="C08B11.2">
    <property type="organism name" value="c. elegans"/>
</dbReference>
<dbReference type="AGR" id="WB:WBGene00001835"/>
<dbReference type="CTD" id="174285"/>
<dbReference type="WormBase" id="C08B11.2">
    <property type="protein sequence ID" value="CE01472"/>
    <property type="gene ID" value="WBGene00001835"/>
    <property type="gene designation" value="hda-2"/>
</dbReference>
<dbReference type="eggNOG" id="KOG1342">
    <property type="taxonomic scope" value="Eukaryota"/>
</dbReference>
<dbReference type="GeneTree" id="ENSGT00940000160487"/>
<dbReference type="HOGENOM" id="CLU_007727_7_1_1"/>
<dbReference type="InParanoid" id="Q09440"/>
<dbReference type="OMA" id="GWLRAFH"/>
<dbReference type="OrthoDB" id="1918432at2759"/>
<dbReference type="PhylomeDB" id="Q09440"/>
<dbReference type="Reactome" id="R-CEL-381340">
    <property type="pathway name" value="Transcriptional regulation of white adipocyte differentiation"/>
</dbReference>
<dbReference type="Reactome" id="R-CEL-9701898">
    <property type="pathway name" value="STAT3 nuclear events downstream of ALK signaling"/>
</dbReference>
<dbReference type="PRO" id="PR:Q09440"/>
<dbReference type="Proteomes" id="UP000001940">
    <property type="component" value="Chromosome II"/>
</dbReference>
<dbReference type="Bgee" id="WBGene00001835">
    <property type="expression patterns" value="Expressed in germ line (C elegans) and 4 other cell types or tissues"/>
</dbReference>
<dbReference type="GO" id="GO:0000118">
    <property type="term" value="C:histone deacetylase complex"/>
    <property type="evidence" value="ECO:0000250"/>
    <property type="project" value="WormBase"/>
</dbReference>
<dbReference type="GO" id="GO:0016581">
    <property type="term" value="C:NuRD complex"/>
    <property type="evidence" value="ECO:0000318"/>
    <property type="project" value="GO_Central"/>
</dbReference>
<dbReference type="GO" id="GO:0004407">
    <property type="term" value="F:histone deacetylase activity"/>
    <property type="evidence" value="ECO:0000250"/>
    <property type="project" value="WormBase"/>
</dbReference>
<dbReference type="GO" id="GO:0141221">
    <property type="term" value="F:histone deacetylase activity, hydrolytic mechanism"/>
    <property type="evidence" value="ECO:0007669"/>
    <property type="project" value="UniProtKB-EC"/>
</dbReference>
<dbReference type="GO" id="GO:0003714">
    <property type="term" value="F:transcription corepressor activity"/>
    <property type="evidence" value="ECO:0000250"/>
    <property type="project" value="WormBase"/>
</dbReference>
<dbReference type="GO" id="GO:0006325">
    <property type="term" value="P:chromatin organization"/>
    <property type="evidence" value="ECO:0000250"/>
    <property type="project" value="WormBase"/>
</dbReference>
<dbReference type="GO" id="GO:0042262">
    <property type="term" value="P:DNA protection"/>
    <property type="evidence" value="ECO:0000315"/>
    <property type="project" value="WormBase"/>
</dbReference>
<dbReference type="GO" id="GO:0031507">
    <property type="term" value="P:heterochromatin formation"/>
    <property type="evidence" value="ECO:0000318"/>
    <property type="project" value="GO_Central"/>
</dbReference>
<dbReference type="GO" id="GO:0000122">
    <property type="term" value="P:negative regulation of transcription by RNA polymerase II"/>
    <property type="evidence" value="ECO:0000250"/>
    <property type="project" value="WormBase"/>
</dbReference>
<dbReference type="GO" id="GO:0045138">
    <property type="term" value="P:nematode male tail tip morphogenesis"/>
    <property type="evidence" value="ECO:0000315"/>
    <property type="project" value="WormBase"/>
</dbReference>
<dbReference type="FunFam" id="3.40.800.20:FF:000024">
    <property type="entry name" value="Histone deacetylase 3"/>
    <property type="match status" value="1"/>
</dbReference>
<dbReference type="Gene3D" id="3.40.800.20">
    <property type="entry name" value="Histone deacetylase domain"/>
    <property type="match status" value="1"/>
</dbReference>
<dbReference type="InterPro" id="IPR050284">
    <property type="entry name" value="HDAC_PDAC"/>
</dbReference>
<dbReference type="InterPro" id="IPR000286">
    <property type="entry name" value="His_deacetylse"/>
</dbReference>
<dbReference type="InterPro" id="IPR003084">
    <property type="entry name" value="His_deacetylse_1"/>
</dbReference>
<dbReference type="InterPro" id="IPR023801">
    <property type="entry name" value="His_deacetylse_dom"/>
</dbReference>
<dbReference type="InterPro" id="IPR037138">
    <property type="entry name" value="His_deacetylse_dom_sf"/>
</dbReference>
<dbReference type="InterPro" id="IPR023696">
    <property type="entry name" value="Ureohydrolase_dom_sf"/>
</dbReference>
<dbReference type="PANTHER" id="PTHR10625:SF27">
    <property type="entry name" value="HISTONE DEACETYLASE 2-RELATED"/>
    <property type="match status" value="1"/>
</dbReference>
<dbReference type="PANTHER" id="PTHR10625">
    <property type="entry name" value="HISTONE DEACETYLASE HDAC1-RELATED"/>
    <property type="match status" value="1"/>
</dbReference>
<dbReference type="Pfam" id="PF00850">
    <property type="entry name" value="Hist_deacetyl"/>
    <property type="match status" value="1"/>
</dbReference>
<dbReference type="PIRSF" id="PIRSF037913">
    <property type="entry name" value="His_deacetylse_1"/>
    <property type="match status" value="1"/>
</dbReference>
<dbReference type="PRINTS" id="PR01270">
    <property type="entry name" value="HDASUPER"/>
</dbReference>
<dbReference type="PRINTS" id="PR01271">
    <property type="entry name" value="HISDACETLASE"/>
</dbReference>
<dbReference type="SUPFAM" id="SSF52768">
    <property type="entry name" value="Arginase/deacetylase"/>
    <property type="match status" value="1"/>
</dbReference>
<reference key="1">
    <citation type="journal article" date="1998" name="Science">
        <title>Genome sequence of the nematode C. elegans: a platform for investigating biology.</title>
        <authorList>
            <consortium name="The C. elegans sequencing consortium"/>
        </authorList>
    </citation>
    <scope>NUCLEOTIDE SEQUENCE [LARGE SCALE GENOMIC DNA]</scope>
    <source>
        <strain>Bristol N2</strain>
    </source>
</reference>
<reference key="2">
    <citation type="journal article" date="2011" name="PLoS Genet.">
        <title>Nuclear cGMP-dependent kinase regulates gene expression via activity-dependent recruitment of a conserved histone deacetylase complex.</title>
        <authorList>
            <person name="Hao Y."/>
            <person name="Xu N."/>
            <person name="Box A.C."/>
            <person name="Schaefer L."/>
            <person name="Kannan K."/>
            <person name="Zhang Y."/>
            <person name="Florens L."/>
            <person name="Seidel C."/>
            <person name="Washburn M.P."/>
            <person name="Wiegraebe W."/>
            <person name="Mak H.Y."/>
        </authorList>
    </citation>
    <scope>FUNCTION</scope>
    <scope>IDENTIFICATION IN HISTONE DEACETYLASE COMPLEX</scope>
</reference>
<keyword id="KW-0156">Chromatin regulator</keyword>
<keyword id="KW-0378">Hydrolase</keyword>
<keyword id="KW-0539">Nucleus</keyword>
<keyword id="KW-1185">Reference proteome</keyword>
<keyword id="KW-0678">Repressor</keyword>
<keyword id="KW-0804">Transcription</keyword>
<keyword id="KW-0805">Transcription regulation</keyword>